<protein>
    <recommendedName>
        <fullName evidence="1">NAD(P)H-hydrate epimerase</fullName>
        <ecNumber>5.1.99.6</ecNumber>
    </recommendedName>
    <alternativeName>
        <fullName evidence="1">NAD(P)HX epimerase</fullName>
    </alternativeName>
</protein>
<feature type="chain" id="PRO_0000416338" description="NAD(P)H-hydrate epimerase">
    <location>
        <begin position="1"/>
        <end position="240"/>
    </location>
</feature>
<feature type="domain" description="YjeF N-terminal" evidence="1">
    <location>
        <begin position="15"/>
        <end position="224"/>
    </location>
</feature>
<feature type="binding site" evidence="1">
    <location>
        <begin position="66"/>
        <end position="70"/>
    </location>
    <ligand>
        <name>(6S)-NADPHX</name>
        <dbReference type="ChEBI" id="CHEBI:64076"/>
    </ligand>
</feature>
<feature type="binding site" evidence="1">
    <location>
        <position position="67"/>
    </location>
    <ligand>
        <name>K(+)</name>
        <dbReference type="ChEBI" id="CHEBI:29103"/>
    </ligand>
</feature>
<feature type="binding site" evidence="1">
    <location>
        <position position="129"/>
    </location>
    <ligand>
        <name>K(+)</name>
        <dbReference type="ChEBI" id="CHEBI:29103"/>
    </ligand>
</feature>
<feature type="binding site" evidence="1">
    <location>
        <begin position="133"/>
        <end position="139"/>
    </location>
    <ligand>
        <name>(6S)-NADPHX</name>
        <dbReference type="ChEBI" id="CHEBI:64076"/>
    </ligand>
</feature>
<feature type="binding site" evidence="1">
    <location>
        <position position="162"/>
    </location>
    <ligand>
        <name>(6S)-NADPHX</name>
        <dbReference type="ChEBI" id="CHEBI:64076"/>
    </ligand>
</feature>
<feature type="binding site" evidence="1">
    <location>
        <position position="165"/>
    </location>
    <ligand>
        <name>K(+)</name>
        <dbReference type="ChEBI" id="CHEBI:29103"/>
    </ligand>
</feature>
<dbReference type="EC" id="5.1.99.6"/>
<dbReference type="EMBL" id="DS178286">
    <property type="protein sequence ID" value="EFP83467.2"/>
    <property type="molecule type" value="Genomic_DNA"/>
</dbReference>
<dbReference type="RefSeq" id="XP_003327886.2">
    <property type="nucleotide sequence ID" value="XM_003327838.2"/>
</dbReference>
<dbReference type="SMR" id="E3KGP2"/>
<dbReference type="FunCoup" id="E3KGP2">
    <property type="interactions" value="40"/>
</dbReference>
<dbReference type="STRING" id="418459.E3KGP2"/>
<dbReference type="EnsemblFungi" id="EFP83467">
    <property type="protein sequence ID" value="EFP83467"/>
    <property type="gene ID" value="PGTG_08653"/>
</dbReference>
<dbReference type="GeneID" id="10532144"/>
<dbReference type="KEGG" id="pgr:PGTG_08653"/>
<dbReference type="VEuPathDB" id="FungiDB:PGTG_08653"/>
<dbReference type="eggNOG" id="KOG2585">
    <property type="taxonomic scope" value="Eukaryota"/>
</dbReference>
<dbReference type="HOGENOM" id="CLU_024853_3_1_1"/>
<dbReference type="InParanoid" id="E3KGP2"/>
<dbReference type="OrthoDB" id="10064708at2759"/>
<dbReference type="Proteomes" id="UP000008783">
    <property type="component" value="Unassembled WGS sequence"/>
</dbReference>
<dbReference type="GO" id="GO:0005739">
    <property type="term" value="C:mitochondrion"/>
    <property type="evidence" value="ECO:0000318"/>
    <property type="project" value="GO_Central"/>
</dbReference>
<dbReference type="GO" id="GO:0046872">
    <property type="term" value="F:metal ion binding"/>
    <property type="evidence" value="ECO:0007669"/>
    <property type="project" value="UniProtKB-KW"/>
</dbReference>
<dbReference type="GO" id="GO:0052856">
    <property type="term" value="F:NAD(P)HX epimerase activity"/>
    <property type="evidence" value="ECO:0000318"/>
    <property type="project" value="GO_Central"/>
</dbReference>
<dbReference type="GO" id="GO:0000166">
    <property type="term" value="F:nucleotide binding"/>
    <property type="evidence" value="ECO:0007669"/>
    <property type="project" value="UniProtKB-KW"/>
</dbReference>
<dbReference type="FunFam" id="3.40.50.10260:FF:000005">
    <property type="entry name" value="NAD(P)H-hydrate epimerase"/>
    <property type="match status" value="1"/>
</dbReference>
<dbReference type="Gene3D" id="3.40.50.10260">
    <property type="entry name" value="YjeF N-terminal domain"/>
    <property type="match status" value="1"/>
</dbReference>
<dbReference type="HAMAP" id="MF_01966">
    <property type="entry name" value="NADHX_epimerase"/>
    <property type="match status" value="1"/>
</dbReference>
<dbReference type="InterPro" id="IPR004443">
    <property type="entry name" value="YjeF_N_dom"/>
</dbReference>
<dbReference type="InterPro" id="IPR036652">
    <property type="entry name" value="YjeF_N_dom_sf"/>
</dbReference>
<dbReference type="InterPro" id="IPR032976">
    <property type="entry name" value="YJEFN_prot_NAXE-like"/>
</dbReference>
<dbReference type="NCBIfam" id="TIGR00197">
    <property type="entry name" value="yjeF_nterm"/>
    <property type="match status" value="1"/>
</dbReference>
<dbReference type="PANTHER" id="PTHR13232">
    <property type="entry name" value="NAD(P)H-HYDRATE EPIMERASE"/>
    <property type="match status" value="1"/>
</dbReference>
<dbReference type="PANTHER" id="PTHR13232:SF10">
    <property type="entry name" value="NAD(P)H-HYDRATE EPIMERASE"/>
    <property type="match status" value="1"/>
</dbReference>
<dbReference type="Pfam" id="PF03853">
    <property type="entry name" value="YjeF_N"/>
    <property type="match status" value="1"/>
</dbReference>
<dbReference type="SUPFAM" id="SSF64153">
    <property type="entry name" value="YjeF N-terminal domain-like"/>
    <property type="match status" value="1"/>
</dbReference>
<dbReference type="PROSITE" id="PS51385">
    <property type="entry name" value="YJEF_N"/>
    <property type="match status" value="1"/>
</dbReference>
<reference key="1">
    <citation type="journal article" date="2011" name="Proc. Natl. Acad. Sci. U.S.A.">
        <title>Obligate biotrophy features unraveled by the genomic analysis of rust fungi.</title>
        <authorList>
            <person name="Duplessis S."/>
            <person name="Cuomo C.A."/>
            <person name="Lin Y.-C."/>
            <person name="Aerts A."/>
            <person name="Tisserant E."/>
            <person name="Veneault-Fourrey C."/>
            <person name="Joly D.L."/>
            <person name="Hacquard S."/>
            <person name="Amselem J."/>
            <person name="Cantarel B.L."/>
            <person name="Chiu R."/>
            <person name="Coutinho P.M."/>
            <person name="Feau N."/>
            <person name="Field M."/>
            <person name="Frey P."/>
            <person name="Gelhaye E."/>
            <person name="Goldberg J."/>
            <person name="Grabherr M.G."/>
            <person name="Kodira C.D."/>
            <person name="Kohler A."/>
            <person name="Kuees U."/>
            <person name="Lindquist E.A."/>
            <person name="Lucas S.M."/>
            <person name="Mago R."/>
            <person name="Mauceli E."/>
            <person name="Morin E."/>
            <person name="Murat C."/>
            <person name="Pangilinan J.L."/>
            <person name="Park R."/>
            <person name="Pearson M."/>
            <person name="Quesneville H."/>
            <person name="Rouhier N."/>
            <person name="Sakthikumar S."/>
            <person name="Salamov A.A."/>
            <person name="Schmutz J."/>
            <person name="Selles B."/>
            <person name="Shapiro H."/>
            <person name="Tanguay P."/>
            <person name="Tuskan G.A."/>
            <person name="Henrissat B."/>
            <person name="Van de Peer Y."/>
            <person name="Rouze P."/>
            <person name="Ellis J.G."/>
            <person name="Dodds P.N."/>
            <person name="Schein J.E."/>
            <person name="Zhong S."/>
            <person name="Hamelin R.C."/>
            <person name="Grigoriev I.V."/>
            <person name="Szabo L.J."/>
            <person name="Martin F."/>
        </authorList>
    </citation>
    <scope>NUCLEOTIDE SEQUENCE [LARGE SCALE GENOMIC DNA]</scope>
    <source>
        <strain>CRL 75-36-700-3 / race SCCL</strain>
    </source>
</reference>
<reference key="2">
    <citation type="journal article" date="2017" name="G3 (Bethesda)">
        <title>Comparative analysis highlights variable genome content of wheat rusts and divergence of the mating loci.</title>
        <authorList>
            <person name="Cuomo C.A."/>
            <person name="Bakkeren G."/>
            <person name="Khalil H.B."/>
            <person name="Panwar V."/>
            <person name="Joly D."/>
            <person name="Linning R."/>
            <person name="Sakthikumar S."/>
            <person name="Song X."/>
            <person name="Adiconis X."/>
            <person name="Fan L."/>
            <person name="Goldberg J.M."/>
            <person name="Levin J.Z."/>
            <person name="Young S."/>
            <person name="Zeng Q."/>
            <person name="Anikster Y."/>
            <person name="Bruce M."/>
            <person name="Wang M."/>
            <person name="Yin C."/>
            <person name="McCallum B."/>
            <person name="Szabo L.J."/>
            <person name="Hulbert S."/>
            <person name="Chen X."/>
            <person name="Fellers J.P."/>
        </authorList>
    </citation>
    <scope>GENOME REANNOTATION</scope>
    <source>
        <strain>CRL 75-36-700-3 / race SCCL</strain>
    </source>
</reference>
<proteinExistence type="inferred from homology"/>
<evidence type="ECO:0000255" key="1">
    <source>
        <dbReference type="HAMAP-Rule" id="MF_03159"/>
    </source>
</evidence>
<organism>
    <name type="scientific">Puccinia graminis f. sp. tritici (strain CRL 75-36-700-3 / race SCCL)</name>
    <name type="common">Black stem rust fungus</name>
    <dbReference type="NCBI Taxonomy" id="418459"/>
    <lineage>
        <taxon>Eukaryota</taxon>
        <taxon>Fungi</taxon>
        <taxon>Dikarya</taxon>
        <taxon>Basidiomycota</taxon>
        <taxon>Pucciniomycotina</taxon>
        <taxon>Pucciniomycetes</taxon>
        <taxon>Pucciniales</taxon>
        <taxon>Pucciniaceae</taxon>
        <taxon>Puccinia</taxon>
    </lineage>
</organism>
<comment type="function">
    <text evidence="1">Catalyzes the epimerization of the S- and R-forms of NAD(P)HX, a damaged form of NAD(P)H that is a result of enzymatic or heat-dependent hydration. This is a prerequisite for the S-specific NAD(P)H-hydrate dehydratase to allow the repair of both epimers of NAD(P)HX.</text>
</comment>
<comment type="catalytic activity">
    <reaction>
        <text>(6R)-NADHX = (6S)-NADHX</text>
        <dbReference type="Rhea" id="RHEA:32215"/>
        <dbReference type="ChEBI" id="CHEBI:64074"/>
        <dbReference type="ChEBI" id="CHEBI:64075"/>
        <dbReference type="EC" id="5.1.99.6"/>
    </reaction>
</comment>
<comment type="catalytic activity">
    <reaction>
        <text>(6R)-NADPHX = (6S)-NADPHX</text>
        <dbReference type="Rhea" id="RHEA:32227"/>
        <dbReference type="ChEBI" id="CHEBI:64076"/>
        <dbReference type="ChEBI" id="CHEBI:64077"/>
        <dbReference type="EC" id="5.1.99.6"/>
    </reaction>
</comment>
<comment type="cofactor">
    <cofactor evidence="1">
        <name>K(+)</name>
        <dbReference type="ChEBI" id="CHEBI:29103"/>
    </cofactor>
    <text evidence="1">Binds 1 potassium ion per subunit.</text>
</comment>
<comment type="subcellular location">
    <subcellularLocation>
        <location evidence="1">Cytoplasm</location>
    </subcellularLocation>
    <subcellularLocation>
        <location evidence="1">Mitochondrion</location>
    </subcellularLocation>
</comment>
<comment type="similarity">
    <text evidence="1">Belongs to the NnrE/AIBP family.</text>
</comment>
<keyword id="KW-0963">Cytoplasm</keyword>
<keyword id="KW-0413">Isomerase</keyword>
<keyword id="KW-0479">Metal-binding</keyword>
<keyword id="KW-0496">Mitochondrion</keyword>
<keyword id="KW-0520">NAD</keyword>
<keyword id="KW-0521">NADP</keyword>
<keyword id="KW-0547">Nucleotide-binding</keyword>
<keyword id="KW-0630">Potassium</keyword>
<keyword id="KW-1185">Reference proteome</keyword>
<gene>
    <name type="ORF">PGTG_08653</name>
</gene>
<accession>E3KGP2</accession>
<name>NNRE_PUCGT</name>
<sequence>MKEDSTMTYLTQKEAQEIDAELMGPKYGYTLAQLMELAGLACAQALHKVYGPERYPRVLVCCGPGNQGGDGLVAARHLWHFGHKPTLYYPKQTDKEHYKSLLRQCETLGIPVIGANFSEAVGETDVILDAIFGFSFHSEPRAPFDEPIRSFQQTQTPIVSVDIPSGWDVETGNPNHVYFTPNVLVSLTAPKRGVKSFPGRHFLGGRFIPPGIVKSYNLKLPCYPSSDQVVEITAVQGEDK</sequence>